<proteinExistence type="inferred from homology"/>
<gene>
    <name evidence="1" type="primary">rplI</name>
    <name type="ordered locus">SAUSA300_0015</name>
</gene>
<protein>
    <recommendedName>
        <fullName evidence="1">Large ribosomal subunit protein bL9</fullName>
    </recommendedName>
    <alternativeName>
        <fullName evidence="2">50S ribosomal protein L9</fullName>
    </alternativeName>
</protein>
<sequence>MKVIFTQDVKGKGKKGEVKEVPVGYANNFLLKKNYAVEATPGNLKQLELQKKRAKQERQQEIEDAKALKETLSNIEVEVSAKTGEGGKLFGSVSTKQIAEALKAQHDIKIDKRKMDLPNGIHSLGYTNVPVKLDKEVEGTIRVHTVEQ</sequence>
<name>RL9_STAA3</name>
<keyword id="KW-0687">Ribonucleoprotein</keyword>
<keyword id="KW-0689">Ribosomal protein</keyword>
<keyword id="KW-0694">RNA-binding</keyword>
<keyword id="KW-0699">rRNA-binding</keyword>
<reference key="1">
    <citation type="journal article" date="2006" name="Lancet">
        <title>Complete genome sequence of USA300, an epidemic clone of community-acquired meticillin-resistant Staphylococcus aureus.</title>
        <authorList>
            <person name="Diep B.A."/>
            <person name="Gill S.R."/>
            <person name="Chang R.F."/>
            <person name="Phan T.H."/>
            <person name="Chen J.H."/>
            <person name="Davidson M.G."/>
            <person name="Lin F."/>
            <person name="Lin J."/>
            <person name="Carleton H.A."/>
            <person name="Mongodin E.F."/>
            <person name="Sensabaugh G.F."/>
            <person name="Perdreau-Remington F."/>
        </authorList>
    </citation>
    <scope>NUCLEOTIDE SEQUENCE [LARGE SCALE GENOMIC DNA]</scope>
    <source>
        <strain>USA300</strain>
    </source>
</reference>
<evidence type="ECO:0000255" key="1">
    <source>
        <dbReference type="HAMAP-Rule" id="MF_00503"/>
    </source>
</evidence>
<evidence type="ECO:0000305" key="2"/>
<comment type="function">
    <text evidence="1">Binds to the 23S rRNA.</text>
</comment>
<comment type="similarity">
    <text evidence="1">Belongs to the bacterial ribosomal protein bL9 family.</text>
</comment>
<feature type="chain" id="PRO_0000236591" description="Large ribosomal subunit protein bL9">
    <location>
        <begin position="1"/>
        <end position="148"/>
    </location>
</feature>
<dbReference type="EMBL" id="CP000255">
    <property type="protein sequence ID" value="ABD22206.1"/>
    <property type="molecule type" value="Genomic_DNA"/>
</dbReference>
<dbReference type="RefSeq" id="WP_000864305.1">
    <property type="nucleotide sequence ID" value="NZ_CP027476.1"/>
</dbReference>
<dbReference type="SMR" id="Q2FKP1"/>
<dbReference type="KEGG" id="saa:SAUSA300_0015"/>
<dbReference type="HOGENOM" id="CLU_078938_3_2_9"/>
<dbReference type="OMA" id="FAIRWTK"/>
<dbReference type="Proteomes" id="UP000001939">
    <property type="component" value="Chromosome"/>
</dbReference>
<dbReference type="GO" id="GO:1990904">
    <property type="term" value="C:ribonucleoprotein complex"/>
    <property type="evidence" value="ECO:0007669"/>
    <property type="project" value="UniProtKB-KW"/>
</dbReference>
<dbReference type="GO" id="GO:0005840">
    <property type="term" value="C:ribosome"/>
    <property type="evidence" value="ECO:0007669"/>
    <property type="project" value="UniProtKB-KW"/>
</dbReference>
<dbReference type="GO" id="GO:0019843">
    <property type="term" value="F:rRNA binding"/>
    <property type="evidence" value="ECO:0007669"/>
    <property type="project" value="UniProtKB-UniRule"/>
</dbReference>
<dbReference type="GO" id="GO:0003735">
    <property type="term" value="F:structural constituent of ribosome"/>
    <property type="evidence" value="ECO:0007669"/>
    <property type="project" value="InterPro"/>
</dbReference>
<dbReference type="GO" id="GO:0006412">
    <property type="term" value="P:translation"/>
    <property type="evidence" value="ECO:0007669"/>
    <property type="project" value="UniProtKB-UniRule"/>
</dbReference>
<dbReference type="FunFam" id="3.10.430.100:FF:000002">
    <property type="entry name" value="50S ribosomal protein L9"/>
    <property type="match status" value="1"/>
</dbReference>
<dbReference type="FunFam" id="3.40.5.10:FF:000002">
    <property type="entry name" value="50S ribosomal protein L9"/>
    <property type="match status" value="1"/>
</dbReference>
<dbReference type="Gene3D" id="3.10.430.100">
    <property type="entry name" value="Ribosomal protein L9, C-terminal domain"/>
    <property type="match status" value="1"/>
</dbReference>
<dbReference type="Gene3D" id="3.40.5.10">
    <property type="entry name" value="Ribosomal protein L9, N-terminal domain"/>
    <property type="match status" value="1"/>
</dbReference>
<dbReference type="HAMAP" id="MF_00503">
    <property type="entry name" value="Ribosomal_bL9"/>
    <property type="match status" value="1"/>
</dbReference>
<dbReference type="InterPro" id="IPR000244">
    <property type="entry name" value="Ribosomal_bL9"/>
</dbReference>
<dbReference type="InterPro" id="IPR009027">
    <property type="entry name" value="Ribosomal_bL9/RNase_H1_N"/>
</dbReference>
<dbReference type="InterPro" id="IPR020594">
    <property type="entry name" value="Ribosomal_bL9_bac/chp"/>
</dbReference>
<dbReference type="InterPro" id="IPR020069">
    <property type="entry name" value="Ribosomal_bL9_C"/>
</dbReference>
<dbReference type="InterPro" id="IPR036791">
    <property type="entry name" value="Ribosomal_bL9_C_sf"/>
</dbReference>
<dbReference type="InterPro" id="IPR020070">
    <property type="entry name" value="Ribosomal_bL9_N"/>
</dbReference>
<dbReference type="InterPro" id="IPR036935">
    <property type="entry name" value="Ribosomal_bL9_N_sf"/>
</dbReference>
<dbReference type="NCBIfam" id="TIGR00158">
    <property type="entry name" value="L9"/>
    <property type="match status" value="1"/>
</dbReference>
<dbReference type="PANTHER" id="PTHR21368">
    <property type="entry name" value="50S RIBOSOMAL PROTEIN L9"/>
    <property type="match status" value="1"/>
</dbReference>
<dbReference type="Pfam" id="PF03948">
    <property type="entry name" value="Ribosomal_L9_C"/>
    <property type="match status" value="1"/>
</dbReference>
<dbReference type="Pfam" id="PF01281">
    <property type="entry name" value="Ribosomal_L9_N"/>
    <property type="match status" value="1"/>
</dbReference>
<dbReference type="SUPFAM" id="SSF55658">
    <property type="entry name" value="L9 N-domain-like"/>
    <property type="match status" value="1"/>
</dbReference>
<dbReference type="SUPFAM" id="SSF55653">
    <property type="entry name" value="Ribosomal protein L9 C-domain"/>
    <property type="match status" value="1"/>
</dbReference>
<dbReference type="PROSITE" id="PS00651">
    <property type="entry name" value="RIBOSOMAL_L9"/>
    <property type="match status" value="1"/>
</dbReference>
<organism>
    <name type="scientific">Staphylococcus aureus (strain USA300)</name>
    <dbReference type="NCBI Taxonomy" id="367830"/>
    <lineage>
        <taxon>Bacteria</taxon>
        <taxon>Bacillati</taxon>
        <taxon>Bacillota</taxon>
        <taxon>Bacilli</taxon>
        <taxon>Bacillales</taxon>
        <taxon>Staphylococcaceae</taxon>
        <taxon>Staphylococcus</taxon>
    </lineage>
</organism>
<accession>Q2FKP1</accession>